<feature type="signal peptide" evidence="5">
    <location>
        <begin position="1"/>
        <end position="25"/>
    </location>
</feature>
<feature type="chain" id="PRO_0000036150" description="Lymphocyte antigen 6H">
    <location>
        <begin position="26"/>
        <end position="110"/>
    </location>
</feature>
<feature type="propeptide" id="PRO_0000036151" description="Removed in mature form" evidence="5">
    <location>
        <begin position="111"/>
        <end position="139"/>
    </location>
</feature>
<feature type="domain" description="UPAR/Ly6">
    <location>
        <begin position="26"/>
        <end position="113"/>
    </location>
</feature>
<feature type="lipid moiety-binding region" description="GPI-anchor amidated asparagine" evidence="5">
    <location>
        <position position="110"/>
    </location>
</feature>
<feature type="glycosylation site" description="N-linked (GlcNAc...) asparagine" evidence="5">
    <location>
        <position position="35"/>
    </location>
</feature>
<feature type="disulfide bond" evidence="3 4">
    <location>
        <begin position="28"/>
        <end position="51"/>
    </location>
</feature>
<feature type="disulfide bond" evidence="3 4">
    <location>
        <begin position="31"/>
        <end position="39"/>
    </location>
</feature>
<feature type="disulfide bond" evidence="3 4">
    <location>
        <begin position="44"/>
        <end position="72"/>
    </location>
</feature>
<feature type="disulfide bond" evidence="3 4">
    <location>
        <begin position="76"/>
        <end position="103"/>
    </location>
</feature>
<feature type="disulfide bond" evidence="3 4">
    <location>
        <begin position="104"/>
        <end position="109"/>
    </location>
</feature>
<sequence>MLPAAMKSLGLALLALLLCPSPAHGLWCQDCTLANSSHCAPKQCQPTDTVCASVRITDPSSSRKDHSVNKMCASSCDFVKRHFFSDYLMGFINSGILKVDVDCCEKDLCNGASVAGRSPWALAGGLLLSLGPALLWAGP</sequence>
<proteinExistence type="evidence at protein level"/>
<evidence type="ECO:0000250" key="1"/>
<evidence type="ECO:0000250" key="2">
    <source>
        <dbReference type="UniProtKB" id="F1LNW6"/>
    </source>
</evidence>
<evidence type="ECO:0000250" key="3">
    <source>
        <dbReference type="UniProtKB" id="P0DP57"/>
    </source>
</evidence>
<evidence type="ECO:0000250" key="4">
    <source>
        <dbReference type="UniProtKB" id="P0DP58"/>
    </source>
</evidence>
<evidence type="ECO:0000255" key="5"/>
<evidence type="ECO:0000269" key="6">
    <source>
    </source>
</evidence>
<evidence type="ECO:0000269" key="7">
    <source>
    </source>
</evidence>
<evidence type="ECO:0000305" key="8"/>
<keyword id="KW-1003">Cell membrane</keyword>
<keyword id="KW-1015">Disulfide bond</keyword>
<keyword id="KW-0325">Glycoprotein</keyword>
<keyword id="KW-0336">GPI-anchor</keyword>
<keyword id="KW-0449">Lipoprotein</keyword>
<keyword id="KW-0472">Membrane</keyword>
<keyword id="KW-1185">Reference proteome</keyword>
<keyword id="KW-0732">Signal</keyword>
<gene>
    <name type="primary">Ly6h</name>
</gene>
<reference key="1">
    <citation type="journal article" date="1999" name="Immunogenetics">
        <title>Identification of mouse Ly6H and its expression in normal tissue.</title>
        <authorList>
            <person name="Apostolopoulos J."/>
            <person name="Chisholm L.J."/>
            <person name="Sandrin M.S."/>
        </authorList>
    </citation>
    <scope>NUCLEOTIDE SEQUENCE [MRNA]</scope>
    <source>
        <strain>BALB/cJ</strain>
        <tissue>Brain</tissue>
    </source>
</reference>
<reference key="2">
    <citation type="journal article" date="2010" name="Cell">
        <title>A tissue-specific atlas of mouse protein phosphorylation and expression.</title>
        <authorList>
            <person name="Huttlin E.L."/>
            <person name="Jedrychowski M.P."/>
            <person name="Elias J.E."/>
            <person name="Goswami T."/>
            <person name="Rad R."/>
            <person name="Beausoleil S.A."/>
            <person name="Villen J."/>
            <person name="Haas W."/>
            <person name="Sowa M.E."/>
            <person name="Gygi S.P."/>
        </authorList>
    </citation>
    <scope>IDENTIFICATION BY MASS SPECTROMETRY [LARGE SCALE ANALYSIS]</scope>
    <source>
        <tissue>Brain</tissue>
    </source>
</reference>
<reference key="3">
    <citation type="journal article" date="2015" name="J. Biol. Chem.">
        <title>Mechanisms of inhibition and potentiation of alpha4beta2 nicotinic acetylcholine receptors by members of the Ly6 protein family.</title>
        <authorList>
            <person name="Wu M."/>
            <person name="Puddifoot C.A."/>
            <person name="Taylor P."/>
            <person name="Joiner W.J."/>
        </authorList>
    </citation>
    <scope>FUNCTION</scope>
    <scope>INTERACTION WITH CHRNA4</scope>
</reference>
<reference key="4">
    <citation type="journal article" date="2015" name="J. Neurosci.">
        <title>Ly6h regulates trafficking of alpha7 nicotinic acetylcholine receptors and nicotine-induced potentiation of glutamatergic signaling.</title>
        <authorList>
            <person name="Puddifoot C.A."/>
            <person name="Wu M."/>
            <person name="Sung R.J."/>
            <person name="Joiner W.J."/>
        </authorList>
    </citation>
    <scope>FUNCTION</scope>
    <scope>INTERACTION WITH CHRNA7</scope>
</reference>
<accession>Q9WUC3</accession>
<organism>
    <name type="scientific">Mus musculus</name>
    <name type="common">Mouse</name>
    <dbReference type="NCBI Taxonomy" id="10090"/>
    <lineage>
        <taxon>Eukaryota</taxon>
        <taxon>Metazoa</taxon>
        <taxon>Chordata</taxon>
        <taxon>Craniata</taxon>
        <taxon>Vertebrata</taxon>
        <taxon>Euteleostomi</taxon>
        <taxon>Mammalia</taxon>
        <taxon>Eutheria</taxon>
        <taxon>Euarchontoglires</taxon>
        <taxon>Glires</taxon>
        <taxon>Rodentia</taxon>
        <taxon>Myomorpha</taxon>
        <taxon>Muroidea</taxon>
        <taxon>Muridae</taxon>
        <taxon>Murinae</taxon>
        <taxon>Mus</taxon>
        <taxon>Mus</taxon>
    </lineage>
</organism>
<protein>
    <recommendedName>
        <fullName>Lymphocyte antigen 6H</fullName>
        <shortName>Ly-6H</shortName>
    </recommendedName>
</protein>
<dbReference type="EMBL" id="AF127091">
    <property type="protein sequence ID" value="AAD28600.1"/>
    <property type="status" value="ALT_INIT"/>
    <property type="molecule type" value="mRNA"/>
</dbReference>
<dbReference type="CCDS" id="CCDS49640.1"/>
<dbReference type="RefSeq" id="NP_001129160.1">
    <property type="nucleotide sequence ID" value="NM_001135688.2"/>
</dbReference>
<dbReference type="RefSeq" id="NP_001129161.1">
    <property type="nucleotide sequence ID" value="NM_001135689.2"/>
</dbReference>
<dbReference type="RefSeq" id="NP_001398786.1">
    <property type="nucleotide sequence ID" value="NM_001411857.1"/>
</dbReference>
<dbReference type="RefSeq" id="NP_001398787.1">
    <property type="nucleotide sequence ID" value="NM_001411858.1"/>
</dbReference>
<dbReference type="RefSeq" id="NP_035967.1">
    <property type="nucleotide sequence ID" value="NM_011837.3"/>
</dbReference>
<dbReference type="RefSeq" id="XP_006520962.1">
    <property type="nucleotide sequence ID" value="XM_006520899.1"/>
</dbReference>
<dbReference type="RefSeq" id="XP_006520963.1">
    <property type="nucleotide sequence ID" value="XM_006520900.2"/>
</dbReference>
<dbReference type="RefSeq" id="XP_006520964.1">
    <property type="nucleotide sequence ID" value="XM_006520901.2"/>
</dbReference>
<dbReference type="RefSeq" id="XP_011243908.1">
    <property type="nucleotide sequence ID" value="XM_011245606.2"/>
</dbReference>
<dbReference type="RefSeq" id="XP_030104395.1">
    <property type="nucleotide sequence ID" value="XM_030248535.1"/>
</dbReference>
<dbReference type="RefSeq" id="XP_030104396.1">
    <property type="nucleotide sequence ID" value="XM_030248536.2"/>
</dbReference>
<dbReference type="BioGRID" id="204802">
    <property type="interactions" value="1"/>
</dbReference>
<dbReference type="FunCoup" id="Q9WUC3">
    <property type="interactions" value="673"/>
</dbReference>
<dbReference type="IntAct" id="Q9WUC3">
    <property type="interactions" value="1"/>
</dbReference>
<dbReference type="STRING" id="10090.ENSMUSP00000122061"/>
<dbReference type="GlyCosmos" id="Q9WUC3">
    <property type="glycosylation" value="1 site, No reported glycans"/>
</dbReference>
<dbReference type="GlyGen" id="Q9WUC3">
    <property type="glycosylation" value="1 site"/>
</dbReference>
<dbReference type="PhosphoSitePlus" id="Q9WUC3"/>
<dbReference type="SwissPalm" id="Q9WUC3"/>
<dbReference type="PaxDb" id="10090-ENSMUSP00000122061"/>
<dbReference type="ProteomicsDB" id="290198"/>
<dbReference type="Antibodypedia" id="27844">
    <property type="antibodies" value="69 antibodies from 16 providers"/>
</dbReference>
<dbReference type="DNASU" id="23934"/>
<dbReference type="Ensembl" id="ENSMUST00000023241.12">
    <property type="protein sequence ID" value="ENSMUSP00000023241.6"/>
    <property type="gene ID" value="ENSMUSG00000022577.19"/>
</dbReference>
<dbReference type="Ensembl" id="ENSMUST00000065417.15">
    <property type="protein sequence ID" value="ENSMUSP00000070646.9"/>
    <property type="gene ID" value="ENSMUSG00000022577.19"/>
</dbReference>
<dbReference type="Ensembl" id="ENSMUST00000126129.8">
    <property type="protein sequence ID" value="ENSMUSP00000121951.2"/>
    <property type="gene ID" value="ENSMUSG00000022577.19"/>
</dbReference>
<dbReference type="GeneID" id="23934"/>
<dbReference type="KEGG" id="mmu:23934"/>
<dbReference type="UCSC" id="uc011zuk.1">
    <property type="organism name" value="mouse"/>
</dbReference>
<dbReference type="AGR" id="MGI:1346030"/>
<dbReference type="CTD" id="4062"/>
<dbReference type="MGI" id="MGI:1346030">
    <property type="gene designation" value="Ly6h"/>
</dbReference>
<dbReference type="VEuPathDB" id="HostDB:ENSMUSG00000022577"/>
<dbReference type="eggNOG" id="ENOG502RVP9">
    <property type="taxonomic scope" value="Eukaryota"/>
</dbReference>
<dbReference type="GeneTree" id="ENSGT00940000154560"/>
<dbReference type="HOGENOM" id="CLU_106772_1_1_1"/>
<dbReference type="InParanoid" id="Q9WUC3"/>
<dbReference type="OMA" id="DVECCEK"/>
<dbReference type="OrthoDB" id="9620902at2759"/>
<dbReference type="Reactome" id="R-MMU-163125">
    <property type="pathway name" value="Post-translational modification: synthesis of GPI-anchored proteins"/>
</dbReference>
<dbReference type="BioGRID-ORCS" id="23934">
    <property type="hits" value="1 hit in 78 CRISPR screens"/>
</dbReference>
<dbReference type="CD-CODE" id="CE726F99">
    <property type="entry name" value="Postsynaptic density"/>
</dbReference>
<dbReference type="PRO" id="PR:Q9WUC3"/>
<dbReference type="Proteomes" id="UP000000589">
    <property type="component" value="Chromosome 15"/>
</dbReference>
<dbReference type="RNAct" id="Q9WUC3">
    <property type="molecule type" value="protein"/>
</dbReference>
<dbReference type="Bgee" id="ENSMUSG00000022577">
    <property type="expression patterns" value="Expressed in subiculum and 161 other cell types or tissues"/>
</dbReference>
<dbReference type="ExpressionAtlas" id="Q9WUC3">
    <property type="expression patterns" value="baseline and differential"/>
</dbReference>
<dbReference type="GO" id="GO:0005886">
    <property type="term" value="C:plasma membrane"/>
    <property type="evidence" value="ECO:0007669"/>
    <property type="project" value="UniProtKB-SubCell"/>
</dbReference>
<dbReference type="GO" id="GO:0098552">
    <property type="term" value="C:side of membrane"/>
    <property type="evidence" value="ECO:0007669"/>
    <property type="project" value="UniProtKB-KW"/>
</dbReference>
<dbReference type="GO" id="GO:0045202">
    <property type="term" value="C:synapse"/>
    <property type="evidence" value="ECO:0007669"/>
    <property type="project" value="GOC"/>
</dbReference>
<dbReference type="GO" id="GO:0033130">
    <property type="term" value="F:acetylcholine receptor binding"/>
    <property type="evidence" value="ECO:0000314"/>
    <property type="project" value="MGI"/>
</dbReference>
<dbReference type="GO" id="GO:0030550">
    <property type="term" value="F:acetylcholine receptor inhibitor activity"/>
    <property type="evidence" value="ECO:0000314"/>
    <property type="project" value="MGI"/>
</dbReference>
<dbReference type="GO" id="GO:0095500">
    <property type="term" value="P:acetylcholine receptor signaling pathway"/>
    <property type="evidence" value="ECO:0000314"/>
    <property type="project" value="MGI"/>
</dbReference>
<dbReference type="CDD" id="cd23549">
    <property type="entry name" value="TFP_LU_ECD_Ly6H"/>
    <property type="match status" value="1"/>
</dbReference>
<dbReference type="FunFam" id="2.10.60.10:FF:000011">
    <property type="entry name" value="lymphocyte antigen 6H isoform X1"/>
    <property type="match status" value="1"/>
</dbReference>
<dbReference type="Gene3D" id="2.10.60.10">
    <property type="entry name" value="CD59"/>
    <property type="match status" value="1"/>
</dbReference>
<dbReference type="InterPro" id="IPR016054">
    <property type="entry name" value="LY6_UPA_recep-like"/>
</dbReference>
<dbReference type="InterPro" id="IPR051445">
    <property type="entry name" value="LY6H/LY6L_nAChR_modulators"/>
</dbReference>
<dbReference type="InterPro" id="IPR045860">
    <property type="entry name" value="Snake_toxin-like_sf"/>
</dbReference>
<dbReference type="PANTHER" id="PTHR32217">
    <property type="entry name" value="LYMPHOCYTE ANTIGEN 6H"/>
    <property type="match status" value="1"/>
</dbReference>
<dbReference type="PANTHER" id="PTHR32217:SF5">
    <property type="entry name" value="LYMPHOCYTE ANTIGEN 6H"/>
    <property type="match status" value="1"/>
</dbReference>
<dbReference type="Pfam" id="PF00021">
    <property type="entry name" value="UPAR_LY6"/>
    <property type="match status" value="1"/>
</dbReference>
<dbReference type="SMART" id="SM00134">
    <property type="entry name" value="LU"/>
    <property type="match status" value="1"/>
</dbReference>
<dbReference type="SUPFAM" id="SSF57302">
    <property type="entry name" value="Snake toxin-like"/>
    <property type="match status" value="1"/>
</dbReference>
<comment type="function">
    <text evidence="2 6 7">Believed to act as modulator of nicotinic acetylcholine receptors (nAChRs) activity. In vitro inhibits alpha-3:beta-4-containing nAChRs maximum response. In vitro inhibits alpha-3:beta-4-containing nAChRs maximum response (PubMed:26276394). May play a role in the intracellular trafficking of alpha-7-containing nAChRs and may inhibit their expression at the cell surface (PubMed:25716842). Seems to inhibit alpha-7/CHRNA7 signaling in hippocampal neurons (By similarity).</text>
</comment>
<comment type="subunit">
    <text evidence="6 7">Interacts with CHRNA4 and CHRNA7.</text>
</comment>
<comment type="subcellular location">
    <subcellularLocation>
        <location evidence="1">Cell membrane</location>
        <topology evidence="1">Lipid-anchor</topology>
        <topology evidence="1">GPI-anchor</topology>
    </subcellularLocation>
</comment>
<comment type="tissue specificity">
    <text>Strongly expressed in brain, also found in lower levels in eye and reproductive tissues.</text>
</comment>
<comment type="developmental stage">
    <text>Expression increases during embryonic development.</text>
</comment>
<comment type="caution">
    <text evidence="8">It is uncertain whether Met-1 or Met-6 is the initiator.</text>
</comment>
<comment type="sequence caution" evidence="8">
    <conflict type="erroneous initiation">
        <sequence resource="EMBL-CDS" id="AAD28600"/>
    </conflict>
</comment>
<name>LY6H_MOUSE</name>